<dbReference type="EMBL" id="AY911330">
    <property type="protein sequence ID" value="AAW82098.1"/>
    <property type="molecule type" value="mRNA"/>
</dbReference>
<dbReference type="EMBL" id="BC109899">
    <property type="protein sequence ID" value="AAI09900.1"/>
    <property type="molecule type" value="mRNA"/>
</dbReference>
<dbReference type="RefSeq" id="NP_001020489.1">
    <property type="nucleotide sequence ID" value="NM_001025318.2"/>
</dbReference>
<dbReference type="SMR" id="Q56JZ7"/>
<dbReference type="FunCoup" id="Q56JZ7">
    <property type="interactions" value="3662"/>
</dbReference>
<dbReference type="STRING" id="9913.ENSBTAP00000025452"/>
<dbReference type="PaxDb" id="9913-ENSBTAP00000025452"/>
<dbReference type="Ensembl" id="ENSBTAT00000025452.3">
    <property type="protein sequence ID" value="ENSBTAP00000025452.2"/>
    <property type="gene ID" value="ENSBTAG00000019119.4"/>
</dbReference>
<dbReference type="GeneID" id="504536"/>
<dbReference type="KEGG" id="bta:504536"/>
<dbReference type="CTD" id="85437"/>
<dbReference type="VEuPathDB" id="HostDB:ENSBTAG00000019119"/>
<dbReference type="VGNC" id="VGNC:37124">
    <property type="gene designation" value="ZCRB1"/>
</dbReference>
<dbReference type="eggNOG" id="KOG0118">
    <property type="taxonomic scope" value="Eukaryota"/>
</dbReference>
<dbReference type="GeneTree" id="ENSGT00730000111061"/>
<dbReference type="HOGENOM" id="CLU_059455_1_0_1"/>
<dbReference type="InParanoid" id="Q56JZ7"/>
<dbReference type="OMA" id="AHYFNDE"/>
<dbReference type="OrthoDB" id="267048at2759"/>
<dbReference type="TreeFam" id="TF106263"/>
<dbReference type="Reactome" id="R-BTA-72165">
    <property type="pathway name" value="mRNA Splicing - Minor Pathway"/>
</dbReference>
<dbReference type="Proteomes" id="UP000009136">
    <property type="component" value="Chromosome 5"/>
</dbReference>
<dbReference type="Bgee" id="ENSBTAG00000019119">
    <property type="expression patterns" value="Expressed in myometrium and 107 other cell types or tissues"/>
</dbReference>
<dbReference type="GO" id="GO:0005654">
    <property type="term" value="C:nucleoplasm"/>
    <property type="evidence" value="ECO:0007669"/>
    <property type="project" value="UniProtKB-SubCell"/>
</dbReference>
<dbReference type="GO" id="GO:0005689">
    <property type="term" value="C:U12-type spliceosomal complex"/>
    <property type="evidence" value="ECO:0000318"/>
    <property type="project" value="GO_Central"/>
</dbReference>
<dbReference type="GO" id="GO:0003723">
    <property type="term" value="F:RNA binding"/>
    <property type="evidence" value="ECO:0007669"/>
    <property type="project" value="UniProtKB-KW"/>
</dbReference>
<dbReference type="GO" id="GO:0008270">
    <property type="term" value="F:zinc ion binding"/>
    <property type="evidence" value="ECO:0007669"/>
    <property type="project" value="UniProtKB-KW"/>
</dbReference>
<dbReference type="GO" id="GO:0000398">
    <property type="term" value="P:mRNA splicing, via spliceosome"/>
    <property type="evidence" value="ECO:0007669"/>
    <property type="project" value="InterPro"/>
</dbReference>
<dbReference type="CDD" id="cd12393">
    <property type="entry name" value="RRM_ZCRB1"/>
    <property type="match status" value="1"/>
</dbReference>
<dbReference type="FunFam" id="3.30.70.330:FF:000233">
    <property type="entry name" value="Zinc finger CCHC-type and RNA-binding motif-containing protein 1"/>
    <property type="match status" value="1"/>
</dbReference>
<dbReference type="FunFam" id="4.10.60.10:FF:000009">
    <property type="entry name" value="Zinc finger CCHC-type and RNA-binding motif-containing protein 1"/>
    <property type="match status" value="1"/>
</dbReference>
<dbReference type="Gene3D" id="3.30.70.330">
    <property type="match status" value="1"/>
</dbReference>
<dbReference type="Gene3D" id="4.10.60.10">
    <property type="entry name" value="Zinc finger, CCHC-type"/>
    <property type="match status" value="1"/>
</dbReference>
<dbReference type="InterPro" id="IPR012677">
    <property type="entry name" value="Nucleotide-bd_a/b_plait_sf"/>
</dbReference>
<dbReference type="InterPro" id="IPR035979">
    <property type="entry name" value="RBD_domain_sf"/>
</dbReference>
<dbReference type="InterPro" id="IPR000504">
    <property type="entry name" value="RRM_dom"/>
</dbReference>
<dbReference type="InterPro" id="IPR003954">
    <property type="entry name" value="RRM_dom_euk"/>
</dbReference>
<dbReference type="InterPro" id="IPR044598">
    <property type="entry name" value="ZCRB1"/>
</dbReference>
<dbReference type="InterPro" id="IPR034219">
    <property type="entry name" value="ZCRB1_RRM"/>
</dbReference>
<dbReference type="InterPro" id="IPR001878">
    <property type="entry name" value="Znf_CCHC"/>
</dbReference>
<dbReference type="InterPro" id="IPR036875">
    <property type="entry name" value="Znf_CCHC_sf"/>
</dbReference>
<dbReference type="PANTHER" id="PTHR46259">
    <property type="entry name" value="ZINC FINGER CCHC-TYPE AND RNA-BINDING MOTIF-CONTAINING PROTEIN 1"/>
    <property type="match status" value="1"/>
</dbReference>
<dbReference type="PANTHER" id="PTHR46259:SF1">
    <property type="entry name" value="ZINC FINGER CCHC-TYPE AND RNA-BINDING MOTIF-CONTAINING PROTEIN 1"/>
    <property type="match status" value="1"/>
</dbReference>
<dbReference type="Pfam" id="PF00076">
    <property type="entry name" value="RRM_1"/>
    <property type="match status" value="1"/>
</dbReference>
<dbReference type="Pfam" id="PF00098">
    <property type="entry name" value="zf-CCHC"/>
    <property type="match status" value="1"/>
</dbReference>
<dbReference type="SMART" id="SM00360">
    <property type="entry name" value="RRM"/>
    <property type="match status" value="1"/>
</dbReference>
<dbReference type="SMART" id="SM00361">
    <property type="entry name" value="RRM_1"/>
    <property type="match status" value="1"/>
</dbReference>
<dbReference type="SMART" id="SM00343">
    <property type="entry name" value="ZnF_C2HC"/>
    <property type="match status" value="1"/>
</dbReference>
<dbReference type="SUPFAM" id="SSF57756">
    <property type="entry name" value="Retrovirus zinc finger-like domains"/>
    <property type="match status" value="1"/>
</dbReference>
<dbReference type="SUPFAM" id="SSF54928">
    <property type="entry name" value="RNA-binding domain, RBD"/>
    <property type="match status" value="1"/>
</dbReference>
<dbReference type="PROSITE" id="PS50102">
    <property type="entry name" value="RRM"/>
    <property type="match status" value="1"/>
</dbReference>
<dbReference type="PROSITE" id="PS50158">
    <property type="entry name" value="ZF_CCHC"/>
    <property type="match status" value="1"/>
</dbReference>
<comment type="subunit">
    <text evidence="1 3">Component of the U11/U12 snRNPs that are part of the U12-type spliceosome. Interacts with ZRSR1 (By similarity).</text>
</comment>
<comment type="subcellular location">
    <subcellularLocation>
        <location evidence="1">Nucleus</location>
        <location evidence="1">Nucleoplasm</location>
    </subcellularLocation>
</comment>
<accession>Q56JZ7</accession>
<accession>Q32KW1</accession>
<reference key="1">
    <citation type="submission" date="2005-01" db="EMBL/GenBank/DDBJ databases">
        <title>Analysis of sequences obtained from constructed full-length bovine cDNA libraries.</title>
        <authorList>
            <person name="Yu J."/>
            <person name="Meng Y."/>
            <person name="Wang Z."/>
            <person name="Hansen C."/>
            <person name="Li C."/>
            <person name="Moore S.S."/>
        </authorList>
    </citation>
    <scope>NUCLEOTIDE SEQUENCE [LARGE SCALE MRNA]</scope>
    <source>
        <tissue>Lymphoid epithelium</tissue>
    </source>
</reference>
<reference key="2">
    <citation type="submission" date="2005-01" db="EMBL/GenBank/DDBJ databases">
        <authorList>
            <consortium name="NIH - Mammalian Gene Collection (MGC) project"/>
        </authorList>
    </citation>
    <scope>NUCLEOTIDE SEQUENCE [LARGE SCALE MRNA] OF 1-139</scope>
    <source>
        <tissue>Lymphoid tissue</tissue>
    </source>
</reference>
<evidence type="ECO:0000250" key="1"/>
<evidence type="ECO:0000250" key="2">
    <source>
        <dbReference type="UniProtKB" id="Q8TBF4"/>
    </source>
</evidence>
<evidence type="ECO:0000250" key="3">
    <source>
        <dbReference type="UniProtKB" id="Q9CZ96"/>
    </source>
</evidence>
<evidence type="ECO:0000255" key="4">
    <source>
        <dbReference type="PROSITE-ProRule" id="PRU00047"/>
    </source>
</evidence>
<evidence type="ECO:0000255" key="5">
    <source>
        <dbReference type="PROSITE-ProRule" id="PRU00176"/>
    </source>
</evidence>
<evidence type="ECO:0000256" key="6">
    <source>
        <dbReference type="SAM" id="MobiDB-lite"/>
    </source>
</evidence>
<gene>
    <name type="primary">ZCRB1</name>
</gene>
<protein>
    <recommendedName>
        <fullName>Zinc finger CCHC-type and RNA-binding motif-containing protein 1</fullName>
    </recommendedName>
    <alternativeName>
        <fullName>U11/U12 small nuclear ribonucleoprotein 31 kDa protein</fullName>
        <shortName>U11/U12 snRNP 31 kDa protein</shortName>
    </alternativeName>
</protein>
<proteinExistence type="evidence at transcript level"/>
<sequence>MSGGLAPSKSTVYVSNLPFSLTNNDLYRIFSKYGKVVKVTIMKDKDTRRSKGVAFILFLDKDSAQNCTRAINNKQLFGRVIKASIAIDNGRAAEFIRRRNYFDKSKCYECGESGHLSYACPKNMLGEREPPKKKEKKKKKKIPEPEEEIEEVEESEDEGEDPALDSLSQAIAFQQAKIEEEQKKWKPSSGGPSTSDDSRRPRIKKSTYFSDEEELSD</sequence>
<keyword id="KW-0479">Metal-binding</keyword>
<keyword id="KW-0507">mRNA processing</keyword>
<keyword id="KW-0508">mRNA splicing</keyword>
<keyword id="KW-0539">Nucleus</keyword>
<keyword id="KW-0597">Phosphoprotein</keyword>
<keyword id="KW-1185">Reference proteome</keyword>
<keyword id="KW-0694">RNA-binding</keyword>
<keyword id="KW-0747">Spliceosome</keyword>
<keyword id="KW-0862">Zinc</keyword>
<keyword id="KW-0863">Zinc-finger</keyword>
<feature type="chain" id="PRO_0000252372" description="Zinc finger CCHC-type and RNA-binding motif-containing protein 1">
    <location>
        <begin position="1"/>
        <end position="217"/>
    </location>
</feature>
<feature type="domain" description="RRM" evidence="5">
    <location>
        <begin position="10"/>
        <end position="88"/>
    </location>
</feature>
<feature type="zinc finger region" description="CCHC-type" evidence="4">
    <location>
        <begin position="105"/>
        <end position="122"/>
    </location>
</feature>
<feature type="region of interest" description="Disordered" evidence="6">
    <location>
        <begin position="120"/>
        <end position="217"/>
    </location>
</feature>
<feature type="compositionally biased region" description="Acidic residues" evidence="6">
    <location>
        <begin position="145"/>
        <end position="163"/>
    </location>
</feature>
<feature type="modified residue" description="Phosphoserine" evidence="2">
    <location>
        <position position="155"/>
    </location>
</feature>
<feature type="modified residue" description="Phosphoserine" evidence="2">
    <location>
        <position position="210"/>
    </location>
</feature>
<feature type="modified residue" description="Phosphoserine" evidence="2">
    <location>
        <position position="216"/>
    </location>
</feature>
<organism>
    <name type="scientific">Bos taurus</name>
    <name type="common">Bovine</name>
    <dbReference type="NCBI Taxonomy" id="9913"/>
    <lineage>
        <taxon>Eukaryota</taxon>
        <taxon>Metazoa</taxon>
        <taxon>Chordata</taxon>
        <taxon>Craniata</taxon>
        <taxon>Vertebrata</taxon>
        <taxon>Euteleostomi</taxon>
        <taxon>Mammalia</taxon>
        <taxon>Eutheria</taxon>
        <taxon>Laurasiatheria</taxon>
        <taxon>Artiodactyla</taxon>
        <taxon>Ruminantia</taxon>
        <taxon>Pecora</taxon>
        <taxon>Bovidae</taxon>
        <taxon>Bovinae</taxon>
        <taxon>Bos</taxon>
    </lineage>
</organism>
<name>ZCRB1_BOVIN</name>